<name>UP06_DAUCA</name>
<organism>
    <name type="scientific">Daucus carota</name>
    <name type="common">Wild carrot</name>
    <dbReference type="NCBI Taxonomy" id="4039"/>
    <lineage>
        <taxon>Eukaryota</taxon>
        <taxon>Viridiplantae</taxon>
        <taxon>Streptophyta</taxon>
        <taxon>Embryophyta</taxon>
        <taxon>Tracheophyta</taxon>
        <taxon>Spermatophyta</taxon>
        <taxon>Magnoliopsida</taxon>
        <taxon>eudicotyledons</taxon>
        <taxon>Gunneridae</taxon>
        <taxon>Pentapetalae</taxon>
        <taxon>asterids</taxon>
        <taxon>campanulids</taxon>
        <taxon>Apiales</taxon>
        <taxon>Apiaceae</taxon>
        <taxon>Apioideae</taxon>
        <taxon>Scandiceae</taxon>
        <taxon>Daucinae</taxon>
        <taxon>Daucus</taxon>
        <taxon>Daucus sect. Daucus</taxon>
    </lineage>
</organism>
<reference evidence="1" key="1">
    <citation type="submission" date="2008-07" db="UniProtKB">
        <authorList>
            <person name="Almagro L."/>
            <person name="Gomez Ros L.V."/>
            <person name="Pedreno M.A."/>
        </authorList>
    </citation>
    <scope>PROTEIN SEQUENCE</scope>
</reference>
<protein>
    <recommendedName>
        <fullName>Unknown protein 6</fullName>
    </recommendedName>
</protein>
<sequence length="12" mass="1300">YGLAADHVLDAR</sequence>
<proteinExistence type="evidence at protein level"/>
<keyword id="KW-0903">Direct protein sequencing</keyword>
<evidence type="ECO:0000305" key="1"/>
<accession>P86069</accession>
<feature type="chain" id="PRO_0000355612" description="Unknown protein 6">
    <location>
        <begin position="1" status="less than"/>
        <end position="12" status="greater than"/>
    </location>
</feature>
<feature type="unsure residue" description="L or I">
    <location>
        <position position="3"/>
    </location>
</feature>
<feature type="unsure residue" description="L or I">
    <location>
        <position position="9"/>
    </location>
</feature>
<feature type="non-terminal residue">
    <location>
        <position position="1"/>
    </location>
</feature>
<feature type="non-terminal residue">
    <location>
        <position position="12"/>
    </location>
</feature>